<comment type="catalytic activity">
    <reaction evidence="1">
        <text>L-histidinol phosphate + 2-oxoglutarate = 3-(imidazol-4-yl)-2-oxopropyl phosphate + L-glutamate</text>
        <dbReference type="Rhea" id="RHEA:23744"/>
        <dbReference type="ChEBI" id="CHEBI:16810"/>
        <dbReference type="ChEBI" id="CHEBI:29985"/>
        <dbReference type="ChEBI" id="CHEBI:57766"/>
        <dbReference type="ChEBI" id="CHEBI:57980"/>
        <dbReference type="EC" id="2.6.1.9"/>
    </reaction>
</comment>
<comment type="cofactor">
    <cofactor evidence="1">
        <name>pyridoxal 5'-phosphate</name>
        <dbReference type="ChEBI" id="CHEBI:597326"/>
    </cofactor>
</comment>
<comment type="pathway">
    <text evidence="1">Amino-acid biosynthesis; L-histidine biosynthesis; L-histidine from 5-phospho-alpha-D-ribose 1-diphosphate: step 7/9.</text>
</comment>
<comment type="subunit">
    <text evidence="1">Homodimer.</text>
</comment>
<comment type="similarity">
    <text evidence="1">Belongs to the class-II pyridoxal-phosphate-dependent aminotransferase family. Histidinol-phosphate aminotransferase subfamily.</text>
</comment>
<feature type="chain" id="PRO_0000153346" description="Histidinol-phosphate aminotransferase">
    <location>
        <begin position="1"/>
        <end position="352"/>
    </location>
</feature>
<feature type="modified residue" description="N6-(pyridoxal phosphate)lysine" evidence="1">
    <location>
        <position position="210"/>
    </location>
</feature>
<evidence type="ECO:0000255" key="1">
    <source>
        <dbReference type="HAMAP-Rule" id="MF_01023"/>
    </source>
</evidence>
<dbReference type="EC" id="2.6.1.9" evidence="1"/>
<dbReference type="EMBL" id="AE001437">
    <property type="protein sequence ID" value="AAK80971.1"/>
    <property type="molecule type" value="Genomic_DNA"/>
</dbReference>
<dbReference type="PIR" id="H97272">
    <property type="entry name" value="H97272"/>
</dbReference>
<dbReference type="RefSeq" id="NP_349631.1">
    <property type="nucleotide sequence ID" value="NC_003030.1"/>
</dbReference>
<dbReference type="RefSeq" id="WP_010966312.1">
    <property type="nucleotide sequence ID" value="NC_003030.1"/>
</dbReference>
<dbReference type="SMR" id="Q97ES6"/>
<dbReference type="STRING" id="272562.CA_C3031"/>
<dbReference type="GeneID" id="44999518"/>
<dbReference type="KEGG" id="cac:CA_C3031"/>
<dbReference type="PATRIC" id="fig|272562.8.peg.3214"/>
<dbReference type="eggNOG" id="COG0079">
    <property type="taxonomic scope" value="Bacteria"/>
</dbReference>
<dbReference type="HOGENOM" id="CLU_017584_3_0_9"/>
<dbReference type="OrthoDB" id="9813612at2"/>
<dbReference type="UniPathway" id="UPA00031">
    <property type="reaction ID" value="UER00012"/>
</dbReference>
<dbReference type="Proteomes" id="UP000000814">
    <property type="component" value="Chromosome"/>
</dbReference>
<dbReference type="GO" id="GO:0004400">
    <property type="term" value="F:histidinol-phosphate transaminase activity"/>
    <property type="evidence" value="ECO:0007669"/>
    <property type="project" value="UniProtKB-UniRule"/>
</dbReference>
<dbReference type="GO" id="GO:0030170">
    <property type="term" value="F:pyridoxal phosphate binding"/>
    <property type="evidence" value="ECO:0007669"/>
    <property type="project" value="InterPro"/>
</dbReference>
<dbReference type="GO" id="GO:0000105">
    <property type="term" value="P:L-histidine biosynthetic process"/>
    <property type="evidence" value="ECO:0007669"/>
    <property type="project" value="UniProtKB-UniRule"/>
</dbReference>
<dbReference type="CDD" id="cd00609">
    <property type="entry name" value="AAT_like"/>
    <property type="match status" value="1"/>
</dbReference>
<dbReference type="Gene3D" id="3.90.1150.10">
    <property type="entry name" value="Aspartate Aminotransferase, domain 1"/>
    <property type="match status" value="1"/>
</dbReference>
<dbReference type="Gene3D" id="3.40.640.10">
    <property type="entry name" value="Type I PLP-dependent aspartate aminotransferase-like (Major domain)"/>
    <property type="match status" value="1"/>
</dbReference>
<dbReference type="HAMAP" id="MF_01023">
    <property type="entry name" value="HisC_aminotrans_2"/>
    <property type="match status" value="1"/>
</dbReference>
<dbReference type="InterPro" id="IPR001917">
    <property type="entry name" value="Aminotrans_II_pyridoxalP_BS"/>
</dbReference>
<dbReference type="InterPro" id="IPR004839">
    <property type="entry name" value="Aminotransferase_I/II_large"/>
</dbReference>
<dbReference type="InterPro" id="IPR005861">
    <property type="entry name" value="HisP_aminotrans"/>
</dbReference>
<dbReference type="InterPro" id="IPR050106">
    <property type="entry name" value="HistidinolP_aminotransfase"/>
</dbReference>
<dbReference type="InterPro" id="IPR015424">
    <property type="entry name" value="PyrdxlP-dep_Trfase"/>
</dbReference>
<dbReference type="InterPro" id="IPR015421">
    <property type="entry name" value="PyrdxlP-dep_Trfase_major"/>
</dbReference>
<dbReference type="InterPro" id="IPR015422">
    <property type="entry name" value="PyrdxlP-dep_Trfase_small"/>
</dbReference>
<dbReference type="NCBIfam" id="TIGR01141">
    <property type="entry name" value="hisC"/>
    <property type="match status" value="1"/>
</dbReference>
<dbReference type="PANTHER" id="PTHR43643:SF3">
    <property type="entry name" value="HISTIDINOL-PHOSPHATE AMINOTRANSFERASE"/>
    <property type="match status" value="1"/>
</dbReference>
<dbReference type="PANTHER" id="PTHR43643">
    <property type="entry name" value="HISTIDINOL-PHOSPHATE AMINOTRANSFERASE 2"/>
    <property type="match status" value="1"/>
</dbReference>
<dbReference type="Pfam" id="PF00155">
    <property type="entry name" value="Aminotran_1_2"/>
    <property type="match status" value="1"/>
</dbReference>
<dbReference type="SUPFAM" id="SSF53383">
    <property type="entry name" value="PLP-dependent transferases"/>
    <property type="match status" value="1"/>
</dbReference>
<dbReference type="PROSITE" id="PS00599">
    <property type="entry name" value="AA_TRANSFER_CLASS_2"/>
    <property type="match status" value="1"/>
</dbReference>
<proteinExistence type="inferred from homology"/>
<organism>
    <name type="scientific">Clostridium acetobutylicum (strain ATCC 824 / DSM 792 / JCM 1419 / IAM 19013 / LMG 5710 / NBRC 13948 / NRRL B-527 / VKM B-1787 / 2291 / W)</name>
    <dbReference type="NCBI Taxonomy" id="272562"/>
    <lineage>
        <taxon>Bacteria</taxon>
        <taxon>Bacillati</taxon>
        <taxon>Bacillota</taxon>
        <taxon>Clostridia</taxon>
        <taxon>Eubacteriales</taxon>
        <taxon>Clostridiaceae</taxon>
        <taxon>Clostridium</taxon>
    </lineage>
</organism>
<accession>Q97ES6</accession>
<keyword id="KW-0028">Amino-acid biosynthesis</keyword>
<keyword id="KW-0032">Aminotransferase</keyword>
<keyword id="KW-0368">Histidine biosynthesis</keyword>
<keyword id="KW-0663">Pyridoxal phosphate</keyword>
<keyword id="KW-1185">Reference proteome</keyword>
<keyword id="KW-0808">Transferase</keyword>
<gene>
    <name evidence="1" type="primary">hisC</name>
    <name type="ordered locus">CA_C3031</name>
</gene>
<sequence length="352" mass="40220">MSKFWNERVKKLEPYVPGEQPKDQKYIKLNTNENPYPPSPMVIEAIKKEADYKLKLYPDPNCDSLKRTIAEYYGISDKEVFVGNGSDEVLAFSFMTFFSPRKTVFFADITYSFYKVYANLLNLNCELIPLKEDFSLDLDNFCRCNGGVIIPNPNAPTAKYIGLSDIKKILDWNKDSVVIIDEAYIDFGGESAVKFIKDYKNLLIVQTLSKSRSLAGLRIGFAMGSPELIEGLSRVKNSINSYTLDRLAIVGAEAAFKDKEYFEDARRKIIATRERVSTELKQIGFKVIESKANFIFISHTTISAESIFNELRKRGILVRYFKTARIDNFLRVSIGTDKEMSEFMDKIKECIA</sequence>
<name>HIS8_CLOAB</name>
<protein>
    <recommendedName>
        <fullName evidence="1">Histidinol-phosphate aminotransferase</fullName>
        <ecNumber evidence="1">2.6.1.9</ecNumber>
    </recommendedName>
    <alternativeName>
        <fullName evidence="1">Imidazole acetol-phosphate transaminase</fullName>
    </alternativeName>
</protein>
<reference key="1">
    <citation type="journal article" date="2001" name="J. Bacteriol.">
        <title>Genome sequence and comparative analysis of the solvent-producing bacterium Clostridium acetobutylicum.</title>
        <authorList>
            <person name="Noelling J."/>
            <person name="Breton G."/>
            <person name="Omelchenko M.V."/>
            <person name="Makarova K.S."/>
            <person name="Zeng Q."/>
            <person name="Gibson R."/>
            <person name="Lee H.M."/>
            <person name="Dubois J."/>
            <person name="Qiu D."/>
            <person name="Hitti J."/>
            <person name="Wolf Y.I."/>
            <person name="Tatusov R.L."/>
            <person name="Sabathe F."/>
            <person name="Doucette-Stamm L.A."/>
            <person name="Soucaille P."/>
            <person name="Daly M.J."/>
            <person name="Bennett G.N."/>
            <person name="Koonin E.V."/>
            <person name="Smith D.R."/>
        </authorList>
    </citation>
    <scope>NUCLEOTIDE SEQUENCE [LARGE SCALE GENOMIC DNA]</scope>
    <source>
        <strain>ATCC 824 / DSM 792 / JCM 1419 / IAM 19013 / LMG 5710 / NBRC 13948 / NRRL B-527 / VKM B-1787 / 2291 / W</strain>
    </source>
</reference>